<protein>
    <recommendedName>
        <fullName>Anaphase-promoting complex subunit 5</fullName>
        <shortName>APC5</shortName>
    </recommendedName>
    <alternativeName>
        <fullName>Cyclosome subunit 5</fullName>
    </alternativeName>
</protein>
<reference key="1">
    <citation type="journal article" date="2004" name="Genome Res.">
        <title>The status, quality, and expansion of the NIH full-length cDNA project: the Mammalian Gene Collection (MGC).</title>
        <authorList>
            <consortium name="The MGC Project Team"/>
        </authorList>
    </citation>
    <scope>NUCLEOTIDE SEQUENCE [LARGE SCALE MRNA]</scope>
    <source>
        <tissue>Lung</tissue>
    </source>
</reference>
<sequence length="727" mass="81739">MMTNGVVHANLFGIKDWVTPYKIAVLVLLNEMGRTGEGAVSLVERRKLNQLLLPLLQGPDITLSKLYKLIEESCPQLANSVQIRIKLMAEGELKDLEQFFDDLSDSFSGTEPEVHKTSVVGLFLRHMILAYSKLSFSQVFKLYTALQQYFQNGEKKTVEDADMDREDGERQMEKEELDVSVREEEVSCSGPLSQKQAEFFLSQQAALLKNDETKALTPASLQKELNNLLKFNPDFAEAHYLSYLNNLRVQDVFSSTHSLLHYFDRLILTGAEGKSNGEEGYGRSLRYAALNLAALHCRFGHYQQAELALQEAIRIAQESNDHVCLQHCLSWLYVLGQKRADSYVLLEHSVKKAVHFGLPRAFAGKTANKLMDALKDSDLLHWKHSLSELIDISIAQKTAIWRLYGRSTMALQQAQMLLSMNSLESLSAGVQQNNTESFAVALCHLAELHAEQGCFAAAGEVLKHLKERFPPNSQHAQLWMLCDQKIQFDRAMNDGKFHLADSLVTGITALNGIEGVYRKAVVLQAQNQMTEAHKLLQKLLTYCQKLKNTEMVISVLLSVAELYWRSSSPTIAMPVLLEALALSKEYRLQYLASETVLNLAYAQLILGIPEQALTLLHMAIEPILADGAILDKGRAMFLVSKCQVASAASYDPVKKAEALEAAIQNLTEAKNYFAKVDCRERIRDVSYFQARLYHALGKTQERNHCAMVFRQLHQELPSHGVPLINHL</sequence>
<name>APC5_RAT</name>
<gene>
    <name type="primary">Anapc5</name>
</gene>
<proteinExistence type="evidence at transcript level"/>
<comment type="function">
    <text evidence="1">Component of the anaphase promoting complex/cyclosome (APC/C), a cell cycle-regulated E3 ubiquitin ligase that controls progression through mitosis and the G1 phase of the cell cycle. The APC/C complex acts by mediating ubiquitination and subsequent degradation of target proteins: it mainly mediates the formation of 'Lys-11'-linked polyubiquitin chains and, to a lower extent, the formation of 'Lys-48'- and 'Lys-63'-linked polyubiquitin chains. The APC/C complex catalyzes assembly of branched 'Lys-11'-/'Lys-48'-linked branched ubiquitin chains on target proteins.</text>
</comment>
<comment type="pathway">
    <text evidence="1">Protein modification; protein ubiquitination.</text>
</comment>
<comment type="subunit">
    <text evidence="1">The mammalian APC/C is composed at least of 14 distinct subunits ANAPC1, ANAPC2, CDC27/APC3, ANAPC4, ANAPC5, CDC16/APC6, ANAPC7, CDC23/APC8, ANAPC10, ANAPC11, CDC26/APC12, ANAPC13, ANAPC15 and ANAPC16 that assemble into a complex of at least 19 chains with a combined molecular mass of around 1.2 MDa; APC/C interacts with FZR1 and FBXO5.</text>
</comment>
<comment type="subcellular location">
    <subcellularLocation>
        <location evidence="1">Nucleus</location>
    </subcellularLocation>
    <subcellularLocation>
        <location evidence="1">Cytoplasm</location>
        <location evidence="1">Cytoskeleton</location>
        <location evidence="1">Spindle</location>
    </subcellularLocation>
</comment>
<comment type="similarity">
    <text evidence="2">Belongs to the APC5 family.</text>
</comment>
<dbReference type="EMBL" id="BC129106">
    <property type="protein sequence ID" value="AAI29107.1"/>
    <property type="molecule type" value="mRNA"/>
</dbReference>
<dbReference type="RefSeq" id="NP_001073616.1">
    <property type="nucleotide sequence ID" value="NM_001080147.2"/>
</dbReference>
<dbReference type="SMR" id="A1L1K3"/>
<dbReference type="BioGRID" id="252650">
    <property type="interactions" value="1"/>
</dbReference>
<dbReference type="FunCoup" id="A1L1K3">
    <property type="interactions" value="2778"/>
</dbReference>
<dbReference type="STRING" id="10116.ENSRNOP00000001794"/>
<dbReference type="iPTMnet" id="A1L1K3"/>
<dbReference type="PhosphoSitePlus" id="A1L1K3"/>
<dbReference type="jPOST" id="A1L1K3"/>
<dbReference type="PaxDb" id="10116-ENSRNOP00000001794"/>
<dbReference type="PeptideAtlas" id="A1L1K3"/>
<dbReference type="GeneID" id="288671"/>
<dbReference type="KEGG" id="rno:288671"/>
<dbReference type="UCSC" id="RGD:1306125">
    <property type="organism name" value="rat"/>
</dbReference>
<dbReference type="AGR" id="RGD:1306125"/>
<dbReference type="CTD" id="51433"/>
<dbReference type="RGD" id="1306125">
    <property type="gene designation" value="Anapc5"/>
</dbReference>
<dbReference type="eggNOG" id="KOG4322">
    <property type="taxonomic scope" value="Eukaryota"/>
</dbReference>
<dbReference type="HOGENOM" id="CLU_020635_0_0_1"/>
<dbReference type="InParanoid" id="A1L1K3"/>
<dbReference type="PhylomeDB" id="A1L1K3"/>
<dbReference type="Reactome" id="R-RNO-141430">
    <property type="pathway name" value="Inactivation of APC/C via direct inhibition of the APC/C complex"/>
</dbReference>
<dbReference type="Reactome" id="R-RNO-174048">
    <property type="pathway name" value="APC/C:Cdc20 mediated degradation of Cyclin B"/>
</dbReference>
<dbReference type="Reactome" id="R-RNO-174084">
    <property type="pathway name" value="Autodegradation of Cdh1 by Cdh1:APC/C"/>
</dbReference>
<dbReference type="Reactome" id="R-RNO-174154">
    <property type="pathway name" value="APC/C:Cdc20 mediated degradation of Securin"/>
</dbReference>
<dbReference type="Reactome" id="R-RNO-174178">
    <property type="pathway name" value="APC/C:Cdh1 mediated degradation of Cdc20 and other APC/C:Cdh1 targeted proteins in late mitosis/early G1"/>
</dbReference>
<dbReference type="Reactome" id="R-RNO-174184">
    <property type="pathway name" value="Cdc20:Phospho-APC/C mediated degradation of Cyclin A"/>
</dbReference>
<dbReference type="Reactome" id="R-RNO-176407">
    <property type="pathway name" value="Conversion from APC/C:Cdc20 to APC/C:Cdh1 in late anaphase"/>
</dbReference>
<dbReference type="Reactome" id="R-RNO-176408">
    <property type="pathway name" value="Regulation of APC/C activators between G1/S and early anaphase"/>
</dbReference>
<dbReference type="Reactome" id="R-RNO-176412">
    <property type="pathway name" value="Phosphorylation of the APC/C"/>
</dbReference>
<dbReference type="Reactome" id="R-RNO-179409">
    <property type="pathway name" value="APC-Cdc20 mediated degradation of Nek2A"/>
</dbReference>
<dbReference type="Reactome" id="R-RNO-2467813">
    <property type="pathway name" value="Separation of Sister Chromatids"/>
</dbReference>
<dbReference type="Reactome" id="R-RNO-2559582">
    <property type="pathway name" value="Senescence-Associated Secretory Phenotype (SASP)"/>
</dbReference>
<dbReference type="Reactome" id="R-RNO-68867">
    <property type="pathway name" value="Assembly of the pre-replicative complex"/>
</dbReference>
<dbReference type="Reactome" id="R-RNO-69017">
    <property type="pathway name" value="CDK-mediated phosphorylation and removal of Cdc6"/>
</dbReference>
<dbReference type="Reactome" id="R-RNO-983168">
    <property type="pathway name" value="Antigen processing: Ubiquitination &amp; Proteasome degradation"/>
</dbReference>
<dbReference type="UniPathway" id="UPA00143"/>
<dbReference type="PRO" id="PR:A1L1K3"/>
<dbReference type="Proteomes" id="UP000002494">
    <property type="component" value="Unplaced"/>
</dbReference>
<dbReference type="GO" id="GO:0005680">
    <property type="term" value="C:anaphase-promoting complex"/>
    <property type="evidence" value="ECO:0000250"/>
    <property type="project" value="UniProtKB"/>
</dbReference>
<dbReference type="GO" id="GO:0005737">
    <property type="term" value="C:cytoplasm"/>
    <property type="evidence" value="ECO:0007669"/>
    <property type="project" value="UniProtKB-KW"/>
</dbReference>
<dbReference type="GO" id="GO:0005634">
    <property type="term" value="C:nucleus"/>
    <property type="evidence" value="ECO:0000250"/>
    <property type="project" value="UniProtKB"/>
</dbReference>
<dbReference type="GO" id="GO:0005819">
    <property type="term" value="C:spindle"/>
    <property type="evidence" value="ECO:0000250"/>
    <property type="project" value="UniProtKB"/>
</dbReference>
<dbReference type="GO" id="GO:0019903">
    <property type="term" value="F:protein phosphatase binding"/>
    <property type="evidence" value="ECO:0000266"/>
    <property type="project" value="RGD"/>
</dbReference>
<dbReference type="GO" id="GO:0031145">
    <property type="term" value="P:anaphase-promoting complex-dependent catabolic process"/>
    <property type="evidence" value="ECO:0000250"/>
    <property type="project" value="UniProtKB"/>
</dbReference>
<dbReference type="GO" id="GO:0051301">
    <property type="term" value="P:cell division"/>
    <property type="evidence" value="ECO:0007669"/>
    <property type="project" value="UniProtKB-KW"/>
</dbReference>
<dbReference type="GO" id="GO:0045842">
    <property type="term" value="P:positive regulation of mitotic metaphase/anaphase transition"/>
    <property type="evidence" value="ECO:0000318"/>
    <property type="project" value="GO_Central"/>
</dbReference>
<dbReference type="GO" id="GO:0141198">
    <property type="term" value="P:protein branched polyubiquitination"/>
    <property type="evidence" value="ECO:0000250"/>
    <property type="project" value="UniProtKB"/>
</dbReference>
<dbReference type="GO" id="GO:0070979">
    <property type="term" value="P:protein K11-linked ubiquitination"/>
    <property type="evidence" value="ECO:0000250"/>
    <property type="project" value="UniProtKB"/>
</dbReference>
<dbReference type="GO" id="GO:0070936">
    <property type="term" value="P:protein K48-linked ubiquitination"/>
    <property type="evidence" value="ECO:0000250"/>
    <property type="project" value="UniProtKB"/>
</dbReference>
<dbReference type="CDD" id="cd16270">
    <property type="entry name" value="Apc5_N"/>
    <property type="match status" value="1"/>
</dbReference>
<dbReference type="FunFam" id="1.25.40.10:FF:000127">
    <property type="entry name" value="anaphase-promoting complex subunit 5 isoform X1"/>
    <property type="match status" value="1"/>
</dbReference>
<dbReference type="Gene3D" id="1.25.40.10">
    <property type="entry name" value="Tetratricopeptide repeat domain"/>
    <property type="match status" value="2"/>
</dbReference>
<dbReference type="InterPro" id="IPR037679">
    <property type="entry name" value="Apc5"/>
</dbReference>
<dbReference type="InterPro" id="IPR026000">
    <property type="entry name" value="Apc5_dom"/>
</dbReference>
<dbReference type="InterPro" id="IPR048968">
    <property type="entry name" value="Apc5_N"/>
</dbReference>
<dbReference type="InterPro" id="IPR011990">
    <property type="entry name" value="TPR-like_helical_dom_sf"/>
</dbReference>
<dbReference type="PANTHER" id="PTHR12830">
    <property type="entry name" value="ANAPHASE-PROMOTING COMPLEX SUBUNIT 5"/>
    <property type="match status" value="1"/>
</dbReference>
<dbReference type="PANTHER" id="PTHR12830:SF9">
    <property type="entry name" value="ANAPHASE-PROMOTING COMPLEX SUBUNIT 5"/>
    <property type="match status" value="1"/>
</dbReference>
<dbReference type="Pfam" id="PF12862">
    <property type="entry name" value="ANAPC5"/>
    <property type="match status" value="2"/>
</dbReference>
<dbReference type="Pfam" id="PF21371">
    <property type="entry name" value="Apc5_N"/>
    <property type="match status" value="1"/>
</dbReference>
<dbReference type="SUPFAM" id="SSF48452">
    <property type="entry name" value="TPR-like"/>
    <property type="match status" value="2"/>
</dbReference>
<evidence type="ECO:0000250" key="1">
    <source>
        <dbReference type="UniProtKB" id="Q9UJX4"/>
    </source>
</evidence>
<evidence type="ECO:0000305" key="2"/>
<feature type="chain" id="PRO_0000307377" description="Anaphase-promoting complex subunit 5">
    <location>
        <begin position="1"/>
        <end position="727"/>
    </location>
</feature>
<feature type="repeat" description="TPR 1">
    <location>
        <begin position="194"/>
        <end position="234"/>
    </location>
</feature>
<feature type="repeat" description="TPR 2">
    <location>
        <begin position="235"/>
        <end position="285"/>
    </location>
</feature>
<feature type="repeat" description="TPR 3">
    <location>
        <begin position="286"/>
        <end position="322"/>
    </location>
</feature>
<feature type="repeat" description="TPR 4">
    <location>
        <begin position="323"/>
        <end position="359"/>
    </location>
</feature>
<feature type="repeat" description="TPR 5">
    <location>
        <begin position="360"/>
        <end position="390"/>
    </location>
</feature>
<feature type="repeat" description="TPR 6">
    <location>
        <begin position="391"/>
        <end position="438"/>
    </location>
</feature>
<feature type="repeat" description="TPR 7">
    <location>
        <begin position="439"/>
        <end position="472"/>
    </location>
</feature>
<feature type="repeat" description="TPR 8">
    <location>
        <begin position="473"/>
        <end position="512"/>
    </location>
</feature>
<feature type="repeat" description="TPR 9">
    <location>
        <begin position="513"/>
        <end position="552"/>
    </location>
</feature>
<feature type="repeat" description="TPR 10">
    <location>
        <begin position="553"/>
        <end position="592"/>
    </location>
</feature>
<feature type="repeat" description="TPR 11">
    <location>
        <begin position="593"/>
        <end position="632"/>
    </location>
</feature>
<feature type="repeat" description="TPR 12">
    <location>
        <begin position="633"/>
        <end position="668"/>
    </location>
</feature>
<feature type="repeat" description="TPR 13">
    <location>
        <begin position="669"/>
        <end position="708"/>
    </location>
</feature>
<feature type="modified residue" description="Phosphoserine" evidence="1">
    <location>
        <position position="180"/>
    </location>
</feature>
<feature type="modified residue" description="Phosphothreonine" evidence="1">
    <location>
        <position position="217"/>
    </location>
</feature>
<accession>A1L1K3</accession>
<keyword id="KW-0131">Cell cycle</keyword>
<keyword id="KW-0132">Cell division</keyword>
<keyword id="KW-0963">Cytoplasm</keyword>
<keyword id="KW-0206">Cytoskeleton</keyword>
<keyword id="KW-0498">Mitosis</keyword>
<keyword id="KW-0539">Nucleus</keyword>
<keyword id="KW-0597">Phosphoprotein</keyword>
<keyword id="KW-1185">Reference proteome</keyword>
<keyword id="KW-0677">Repeat</keyword>
<keyword id="KW-0802">TPR repeat</keyword>
<keyword id="KW-0833">Ubl conjugation pathway</keyword>
<organism>
    <name type="scientific">Rattus norvegicus</name>
    <name type="common">Rat</name>
    <dbReference type="NCBI Taxonomy" id="10116"/>
    <lineage>
        <taxon>Eukaryota</taxon>
        <taxon>Metazoa</taxon>
        <taxon>Chordata</taxon>
        <taxon>Craniata</taxon>
        <taxon>Vertebrata</taxon>
        <taxon>Euteleostomi</taxon>
        <taxon>Mammalia</taxon>
        <taxon>Eutheria</taxon>
        <taxon>Euarchontoglires</taxon>
        <taxon>Glires</taxon>
        <taxon>Rodentia</taxon>
        <taxon>Myomorpha</taxon>
        <taxon>Muroidea</taxon>
        <taxon>Muridae</taxon>
        <taxon>Murinae</taxon>
        <taxon>Rattus</taxon>
    </lineage>
</organism>